<evidence type="ECO:0000255" key="1">
    <source>
        <dbReference type="HAMAP-Rule" id="MF_01578"/>
    </source>
</evidence>
<protein>
    <recommendedName>
        <fullName evidence="1">Quinate/shikimate dehydrogenase</fullName>
        <ecNumber evidence="1">1.1.1.282</ecNumber>
    </recommendedName>
    <alternativeName>
        <fullName evidence="1">NAD-dependent shikimate 5-dehydrogenase</fullName>
    </alternativeName>
</protein>
<feature type="chain" id="PRO_1000147550" description="Quinate/shikimate dehydrogenase">
    <location>
        <begin position="1"/>
        <end position="288"/>
    </location>
</feature>
<feature type="binding site" evidence="1">
    <location>
        <position position="71"/>
    </location>
    <ligand>
        <name>substrate</name>
    </ligand>
</feature>
<feature type="binding site" evidence="1">
    <location>
        <position position="107"/>
    </location>
    <ligand>
        <name>substrate</name>
    </ligand>
</feature>
<feature type="binding site" evidence="1">
    <location>
        <begin position="132"/>
        <end position="135"/>
    </location>
    <ligand>
        <name>NAD(+)</name>
        <dbReference type="ChEBI" id="CHEBI:57540"/>
    </ligand>
</feature>
<feature type="binding site" evidence="1">
    <location>
        <begin position="155"/>
        <end position="158"/>
    </location>
    <ligand>
        <name>NAD(+)</name>
        <dbReference type="ChEBI" id="CHEBI:57540"/>
    </ligand>
</feature>
<feature type="binding site" evidence="1">
    <location>
        <position position="205"/>
    </location>
    <ligand>
        <name>NAD(+)</name>
        <dbReference type="ChEBI" id="CHEBI:57540"/>
    </ligand>
</feature>
<feature type="binding site" evidence="1">
    <location>
        <begin position="232"/>
        <end position="235"/>
    </location>
    <ligand>
        <name>NAD(+)</name>
        <dbReference type="ChEBI" id="CHEBI:57540"/>
    </ligand>
</feature>
<feature type="binding site" evidence="1">
    <location>
        <position position="255"/>
    </location>
    <ligand>
        <name>NAD(+)</name>
        <dbReference type="ChEBI" id="CHEBI:57540"/>
    </ligand>
</feature>
<gene>
    <name evidence="1" type="primary">ydiB</name>
    <name type="ordered locus">ECIAI1_1745</name>
</gene>
<name>YDIB_ECO8A</name>
<accession>B7M0P8</accession>
<proteinExistence type="inferred from homology"/>
<sequence length="288" mass="31242">MDVTAKYELIGLMAYPIRHSLSPEMQNKALEKAGLPFTYMAFEVDNDSFPGAIEGLKALKMRGTGISMPNKQLACEYVDELTPAAKLVGAINTIVNDDGYLRGYNTDGTGHIRAIKESGFDIKGKTMVLLGAGGASTAIGAQGAIEGLKEIKLFNRRDEFFDKALAFAQRVNENTDCVVTVTDLADQQAFAEALASADILTNGTKVGMKPLENESLVNDISLLHPGLLVTECVYNPHMTKLLQQAQQAGCKTIDGYGMLLWQGAEQFTLWTGKDFPLEYVKQVMGFGA</sequence>
<dbReference type="EC" id="1.1.1.282" evidence="1"/>
<dbReference type="EMBL" id="CU928160">
    <property type="protein sequence ID" value="CAQ98602.1"/>
    <property type="molecule type" value="Genomic_DNA"/>
</dbReference>
<dbReference type="RefSeq" id="WP_000383460.1">
    <property type="nucleotide sequence ID" value="NC_011741.1"/>
</dbReference>
<dbReference type="SMR" id="B7M0P8"/>
<dbReference type="GeneID" id="75204539"/>
<dbReference type="KEGG" id="ecr:ECIAI1_1745"/>
<dbReference type="HOGENOM" id="CLU_044063_4_4_6"/>
<dbReference type="UniPathway" id="UPA00053">
    <property type="reaction ID" value="UER00087"/>
</dbReference>
<dbReference type="GO" id="GO:0030266">
    <property type="term" value="F:quinate 3-dehydrogenase (NAD+) activity"/>
    <property type="evidence" value="ECO:0007669"/>
    <property type="project" value="UniProtKB-UniRule"/>
</dbReference>
<dbReference type="GO" id="GO:0052733">
    <property type="term" value="F:quinate 3-dehydrogenase (NADP+) activity"/>
    <property type="evidence" value="ECO:0007669"/>
    <property type="project" value="InterPro"/>
</dbReference>
<dbReference type="GO" id="GO:0052734">
    <property type="term" value="F:shikimate 3-dehydrogenase (NAD+) activity"/>
    <property type="evidence" value="ECO:0007669"/>
    <property type="project" value="InterPro"/>
</dbReference>
<dbReference type="GO" id="GO:0004764">
    <property type="term" value="F:shikimate 3-dehydrogenase (NADP+) activity"/>
    <property type="evidence" value="ECO:0007669"/>
    <property type="project" value="UniProtKB-UniRule"/>
</dbReference>
<dbReference type="GO" id="GO:0008652">
    <property type="term" value="P:amino acid biosynthetic process"/>
    <property type="evidence" value="ECO:0007669"/>
    <property type="project" value="UniProtKB-KW"/>
</dbReference>
<dbReference type="GO" id="GO:0009073">
    <property type="term" value="P:aromatic amino acid family biosynthetic process"/>
    <property type="evidence" value="ECO:0007669"/>
    <property type="project" value="UniProtKB-KW"/>
</dbReference>
<dbReference type="GO" id="GO:0009423">
    <property type="term" value="P:chorismate biosynthetic process"/>
    <property type="evidence" value="ECO:0007669"/>
    <property type="project" value="UniProtKB-UniRule"/>
</dbReference>
<dbReference type="GO" id="GO:0019632">
    <property type="term" value="P:shikimate metabolic process"/>
    <property type="evidence" value="ECO:0007669"/>
    <property type="project" value="TreeGrafter"/>
</dbReference>
<dbReference type="CDD" id="cd01065">
    <property type="entry name" value="NAD_bind_Shikimate_DH"/>
    <property type="match status" value="1"/>
</dbReference>
<dbReference type="FunFam" id="3.40.50.10860:FF:000004">
    <property type="entry name" value="Quinate/shikimate dehydrogenase"/>
    <property type="match status" value="1"/>
</dbReference>
<dbReference type="FunFam" id="3.40.50.720:FF:000086">
    <property type="entry name" value="Quinate/shikimate dehydrogenase"/>
    <property type="match status" value="1"/>
</dbReference>
<dbReference type="Gene3D" id="3.40.50.10860">
    <property type="entry name" value="Leucine Dehydrogenase, chain A, domain 1"/>
    <property type="match status" value="1"/>
</dbReference>
<dbReference type="Gene3D" id="3.40.50.720">
    <property type="entry name" value="NAD(P)-binding Rossmann-like Domain"/>
    <property type="match status" value="1"/>
</dbReference>
<dbReference type="HAMAP" id="MF_00222">
    <property type="entry name" value="Shikimate_DH_AroE"/>
    <property type="match status" value="1"/>
</dbReference>
<dbReference type="HAMAP" id="MF_01578">
    <property type="entry name" value="Shikimate_DH_YdiB"/>
    <property type="match status" value="1"/>
</dbReference>
<dbReference type="InterPro" id="IPR046346">
    <property type="entry name" value="Aminoacid_DH-like_N_sf"/>
</dbReference>
<dbReference type="InterPro" id="IPR036291">
    <property type="entry name" value="NAD(P)-bd_dom_sf"/>
</dbReference>
<dbReference type="InterPro" id="IPR022872">
    <property type="entry name" value="Quinate/Shikimate_DH"/>
</dbReference>
<dbReference type="InterPro" id="IPR041121">
    <property type="entry name" value="SDH_C"/>
</dbReference>
<dbReference type="InterPro" id="IPR013708">
    <property type="entry name" value="Shikimate_DH-bd_N"/>
</dbReference>
<dbReference type="InterPro" id="IPR022893">
    <property type="entry name" value="Shikimate_DH_fam"/>
</dbReference>
<dbReference type="NCBIfam" id="NF009390">
    <property type="entry name" value="PRK12749.1"/>
    <property type="match status" value="1"/>
</dbReference>
<dbReference type="PANTHER" id="PTHR21089:SF1">
    <property type="entry name" value="BIFUNCTIONAL 3-DEHYDROQUINATE DEHYDRATASE_SHIKIMATE DEHYDROGENASE, CHLOROPLASTIC"/>
    <property type="match status" value="1"/>
</dbReference>
<dbReference type="PANTHER" id="PTHR21089">
    <property type="entry name" value="SHIKIMATE DEHYDROGENASE"/>
    <property type="match status" value="1"/>
</dbReference>
<dbReference type="Pfam" id="PF18317">
    <property type="entry name" value="SDH_C"/>
    <property type="match status" value="1"/>
</dbReference>
<dbReference type="Pfam" id="PF08501">
    <property type="entry name" value="Shikimate_dh_N"/>
    <property type="match status" value="1"/>
</dbReference>
<dbReference type="SUPFAM" id="SSF53223">
    <property type="entry name" value="Aminoacid dehydrogenase-like, N-terminal domain"/>
    <property type="match status" value="1"/>
</dbReference>
<dbReference type="SUPFAM" id="SSF51735">
    <property type="entry name" value="NAD(P)-binding Rossmann-fold domains"/>
    <property type="match status" value="1"/>
</dbReference>
<organism>
    <name type="scientific">Escherichia coli O8 (strain IAI1)</name>
    <dbReference type="NCBI Taxonomy" id="585034"/>
    <lineage>
        <taxon>Bacteria</taxon>
        <taxon>Pseudomonadati</taxon>
        <taxon>Pseudomonadota</taxon>
        <taxon>Gammaproteobacteria</taxon>
        <taxon>Enterobacterales</taxon>
        <taxon>Enterobacteriaceae</taxon>
        <taxon>Escherichia</taxon>
    </lineage>
</organism>
<keyword id="KW-0028">Amino-acid biosynthesis</keyword>
<keyword id="KW-0057">Aromatic amino acid biosynthesis</keyword>
<keyword id="KW-0520">NAD</keyword>
<keyword id="KW-0521">NADP</keyword>
<keyword id="KW-0560">Oxidoreductase</keyword>
<reference key="1">
    <citation type="journal article" date="2009" name="PLoS Genet.">
        <title>Organised genome dynamics in the Escherichia coli species results in highly diverse adaptive paths.</title>
        <authorList>
            <person name="Touchon M."/>
            <person name="Hoede C."/>
            <person name="Tenaillon O."/>
            <person name="Barbe V."/>
            <person name="Baeriswyl S."/>
            <person name="Bidet P."/>
            <person name="Bingen E."/>
            <person name="Bonacorsi S."/>
            <person name="Bouchier C."/>
            <person name="Bouvet O."/>
            <person name="Calteau A."/>
            <person name="Chiapello H."/>
            <person name="Clermont O."/>
            <person name="Cruveiller S."/>
            <person name="Danchin A."/>
            <person name="Diard M."/>
            <person name="Dossat C."/>
            <person name="Karoui M.E."/>
            <person name="Frapy E."/>
            <person name="Garry L."/>
            <person name="Ghigo J.M."/>
            <person name="Gilles A.M."/>
            <person name="Johnson J."/>
            <person name="Le Bouguenec C."/>
            <person name="Lescat M."/>
            <person name="Mangenot S."/>
            <person name="Martinez-Jehanne V."/>
            <person name="Matic I."/>
            <person name="Nassif X."/>
            <person name="Oztas S."/>
            <person name="Petit M.A."/>
            <person name="Pichon C."/>
            <person name="Rouy Z."/>
            <person name="Ruf C.S."/>
            <person name="Schneider D."/>
            <person name="Tourret J."/>
            <person name="Vacherie B."/>
            <person name="Vallenet D."/>
            <person name="Medigue C."/>
            <person name="Rocha E.P.C."/>
            <person name="Denamur E."/>
        </authorList>
    </citation>
    <scope>NUCLEOTIDE SEQUENCE [LARGE SCALE GENOMIC DNA]</scope>
    <source>
        <strain>IAI1</strain>
    </source>
</reference>
<comment type="function">
    <text evidence="1">The actual biological function of YdiB remains unclear, nor is it known whether 3-dehydroshikimate or quinate represents the natural substrate. Catalyzes the reversible NAD-dependent reduction of both 3-dehydroshikimate (DHSA) and 3-dehydroquinate to yield shikimate (SA) and quinate, respectively. It can use both NAD or NADP for catalysis, however it has higher catalytic efficiency with NAD.</text>
</comment>
<comment type="catalytic activity">
    <reaction evidence="1">
        <text>L-quinate + NAD(+) = 3-dehydroquinate + NADH + H(+)</text>
        <dbReference type="Rhea" id="RHEA:22364"/>
        <dbReference type="ChEBI" id="CHEBI:15378"/>
        <dbReference type="ChEBI" id="CHEBI:29751"/>
        <dbReference type="ChEBI" id="CHEBI:32364"/>
        <dbReference type="ChEBI" id="CHEBI:57540"/>
        <dbReference type="ChEBI" id="CHEBI:57945"/>
        <dbReference type="EC" id="1.1.1.282"/>
    </reaction>
</comment>
<comment type="catalytic activity">
    <reaction evidence="1">
        <text>L-quinate + NADP(+) = 3-dehydroquinate + NADPH + H(+)</text>
        <dbReference type="Rhea" id="RHEA:18425"/>
        <dbReference type="ChEBI" id="CHEBI:15378"/>
        <dbReference type="ChEBI" id="CHEBI:29751"/>
        <dbReference type="ChEBI" id="CHEBI:32364"/>
        <dbReference type="ChEBI" id="CHEBI:57783"/>
        <dbReference type="ChEBI" id="CHEBI:58349"/>
        <dbReference type="EC" id="1.1.1.282"/>
    </reaction>
</comment>
<comment type="catalytic activity">
    <reaction evidence="1">
        <text>shikimate + NADP(+) = 3-dehydroshikimate + NADPH + H(+)</text>
        <dbReference type="Rhea" id="RHEA:17737"/>
        <dbReference type="ChEBI" id="CHEBI:15378"/>
        <dbReference type="ChEBI" id="CHEBI:16630"/>
        <dbReference type="ChEBI" id="CHEBI:36208"/>
        <dbReference type="ChEBI" id="CHEBI:57783"/>
        <dbReference type="ChEBI" id="CHEBI:58349"/>
        <dbReference type="EC" id="1.1.1.282"/>
    </reaction>
</comment>
<comment type="catalytic activity">
    <reaction evidence="1">
        <text>shikimate + NAD(+) = 3-dehydroshikimate + NADH + H(+)</text>
        <dbReference type="Rhea" id="RHEA:17741"/>
        <dbReference type="ChEBI" id="CHEBI:15378"/>
        <dbReference type="ChEBI" id="CHEBI:16630"/>
        <dbReference type="ChEBI" id="CHEBI:36208"/>
        <dbReference type="ChEBI" id="CHEBI:57540"/>
        <dbReference type="ChEBI" id="CHEBI:57945"/>
        <dbReference type="EC" id="1.1.1.282"/>
    </reaction>
</comment>
<comment type="pathway">
    <text evidence="1">Metabolic intermediate biosynthesis; chorismate biosynthesis; chorismate from D-erythrose 4-phosphate and phosphoenolpyruvate: step 4/7.</text>
</comment>
<comment type="subunit">
    <text evidence="1">Homodimer.</text>
</comment>
<comment type="similarity">
    <text evidence="1">Belongs to the shikimate dehydrogenase family.</text>
</comment>